<sequence length="1827" mass="193315">MTSLAERAAQLSPNARAALARELVRAGTTFPTDICEPVAVVGIGCRFPGNVTGPESFWQLLADGVDTIEQVPPDRWDADAFYDPDPSASGRMTTKWGGFVSDVDAFDADFFGITPREAVAMDPQHRMLLEVAWEALEHAGIPPDSLSGTRTGVMMGLSSWDYTIVNIERRADIDAYLSTGTPHCAAVGRIAYLLGLRGPAVAVDTACSSSLVAIHLACQSLRLRETDVALAGGVQLTLSPFTAIALSKWSALSPTGRCNSFDANADGFVRGEGCGVVVLKRLADAVRDQDRVLAVVRGSATNSDGRSNGMTAPNALAQRDVITSALKLADVTPDSVNYVETHGTGTVLGDPIEFESLAATYGLGKGQGESPCALGSVKTNIGHLEAAAGVAGFIKAVLAVQRGHIPRNLHFTRWNPAIDASATRLFVPTESAPWPAAAGPRRAAVSSFGLSGTNAHVVVEQAPDTAVAAAGGMPYVSALNVSGKTAARVASAAAVLADWMSGPGAAAPLADVAHTLNRHRARHAKFATVIARDRAEAIAGLRALAAGQPRVGVVDCDQHAGGPGRVFVYSGQGSQWASMGQQLLANEPAFAKAVAELDPIFVDQVGFSLQQTLIDGDEVVGIDRIQPVLVGMQLALTELWRSYGVIPDAVIGHSMGEVSAAVVAGALTPEQGLRVITTRSRLMARLSGQGAMALLELDADAAEALIAGYPQVTLAVHASPRQTVIAGPPEQVDTVIAAVATQNRLARRVEVDVASHHPIIDPILPELRSALADLTPQPPSIPIISTTYESAQPVADADYWSANLRNPVRFHQAVTAAGVDHNTFIEISPHPVLTHALTDTLDPDGSHTVMSTMNRELDQTLYFHAQLAAVGVAASEHTTGRLVDLPPTPWHHQRFWVTDRSAMSELAATHPLLGAHIEMPRNGDHVWQTDVGTEVCPWLADHKVFGQPIMPAAGFAEIALAAASEALGTAADAVAPNIVINQFEVEQMLPLDGHTPLTTQLIRGGDSQIRVEIYSRTRGGEFCRHATAKVEQSPRECAHAHPEAQGPATGTTVSPADFYALLRQTGQHHGPAFAALSRIVRLADGSAETEISIPDEAPRHPGYRLHPVVLDAALQSVGAAIPDGEIAGSAEASYLPVSFETIRVYRDIGRHVRCRAHLTNLDGGTGKMGRIVLINDAGHIAAEVDGIYLRRVERRAVPLPLEQKIFDAEWTESPIAAVPAPEPAAETTRGSWLVLADATVDAPGKAQAKSMADDFVQQWRSPMRRVHTADIHDESAVLAAFAETAGDPEHPPVGVVVFVGGASSRLDDELAAARDTVWSITTVVRAVVGTWHGRSPRLWLVTGGGLSVADDEPGTPAAASLKGLVRVLAFEHPDMRTTLVDLDITQDPLTALSAELRNAGSGSRHDDVIAWRGERRFVERLSRATIDVSKGHPVVRQGASYVVTGGLGGLGLVVARWLVDRGAGRVVLGGRSDPTDEQCNVLAELQTRAEIVVVRGDVASPGVAEKLIETARQSGGQLRGVVHAAAVIEDSLVFSMSRDNLERVWAPKATGALRMHEATADCELDWWLGFSSAASLLGSPGQAAYACASAWLDALVGWRRASGLPAAVINWGPWSEVGVAQALVGSVLDTISVAEGIEALDSLLAADRIRTGVARLRADRALVAFPEIRSISYFTQVVEELDSAGDLGDWGGPDALADLDPGEARRAVTERMCARIAAVMGYTDQSTVEPAVPLDKPLTELGLDSLMAVRIRNGARADFGVEPPVALILQGASLHDLTADLMRQLGLNDPDPALNNADTIRDRARQRAAARHGAAMRRRPKPEVQGG</sequence>
<organism>
    <name type="scientific">Mycobacterium tuberculosis (strain ATCC 25618 / H37Rv)</name>
    <dbReference type="NCBI Taxonomy" id="83332"/>
    <lineage>
        <taxon>Bacteria</taxon>
        <taxon>Bacillati</taxon>
        <taxon>Actinomycetota</taxon>
        <taxon>Actinomycetes</taxon>
        <taxon>Mycobacteriales</taxon>
        <taxon>Mycobacteriaceae</taxon>
        <taxon>Mycobacterium</taxon>
        <taxon>Mycobacterium tuberculosis complex</taxon>
    </lineage>
</organism>
<proteinExistence type="evidence at protein level"/>
<dbReference type="EC" id="2.3.1.292" evidence="7 10"/>
<dbReference type="EMBL" id="AL123456">
    <property type="protein sequence ID" value="CCP45737.1"/>
    <property type="molecule type" value="Genomic_DNA"/>
</dbReference>
<dbReference type="PIR" id="B70984">
    <property type="entry name" value="B70984"/>
</dbReference>
<dbReference type="RefSeq" id="NP_217450.1">
    <property type="nucleotide sequence ID" value="NC_000962.3"/>
</dbReference>
<dbReference type="RefSeq" id="WP_003899549.1">
    <property type="nucleotide sequence ID" value="NZ_NVQJ01000015.1"/>
</dbReference>
<dbReference type="SMR" id="P9WQE3"/>
<dbReference type="FunCoup" id="P9WQE3">
    <property type="interactions" value="20"/>
</dbReference>
<dbReference type="STRING" id="83332.Rv2934"/>
<dbReference type="PaxDb" id="83332-Rv2934"/>
<dbReference type="GeneID" id="887172"/>
<dbReference type="KEGG" id="mtu:Rv2934"/>
<dbReference type="KEGG" id="mtv:RVBD_2934"/>
<dbReference type="TubercuList" id="Rv2934"/>
<dbReference type="eggNOG" id="COG1028">
    <property type="taxonomic scope" value="Bacteria"/>
</dbReference>
<dbReference type="eggNOG" id="COG3321">
    <property type="taxonomic scope" value="Bacteria"/>
</dbReference>
<dbReference type="InParanoid" id="P9WQE3"/>
<dbReference type="OrthoDB" id="9778690at2"/>
<dbReference type="PhylomeDB" id="P9WQE3"/>
<dbReference type="UniPathway" id="UPA00094"/>
<dbReference type="Proteomes" id="UP000001584">
    <property type="component" value="Chromosome"/>
</dbReference>
<dbReference type="GO" id="GO:0005737">
    <property type="term" value="C:cytoplasm"/>
    <property type="evidence" value="ECO:0000318"/>
    <property type="project" value="GO_Central"/>
</dbReference>
<dbReference type="GO" id="GO:0005886">
    <property type="term" value="C:plasma membrane"/>
    <property type="evidence" value="ECO:0007005"/>
    <property type="project" value="MTBBASE"/>
</dbReference>
<dbReference type="GO" id="GO:0034081">
    <property type="term" value="C:polyketide synthase complex"/>
    <property type="evidence" value="ECO:0000250"/>
    <property type="project" value="UniProtKB"/>
</dbReference>
<dbReference type="GO" id="GO:0004315">
    <property type="term" value="F:3-oxoacyl-[acyl-carrier-protein] synthase activity"/>
    <property type="evidence" value="ECO:0007669"/>
    <property type="project" value="InterPro"/>
</dbReference>
<dbReference type="GO" id="GO:0004312">
    <property type="term" value="F:fatty acid synthase activity"/>
    <property type="evidence" value="ECO:0000318"/>
    <property type="project" value="GO_Central"/>
</dbReference>
<dbReference type="GO" id="GO:0016491">
    <property type="term" value="F:oxidoreductase activity"/>
    <property type="evidence" value="ECO:0007669"/>
    <property type="project" value="UniProtKB-KW"/>
</dbReference>
<dbReference type="GO" id="GO:0031177">
    <property type="term" value="F:phosphopantetheine binding"/>
    <property type="evidence" value="ECO:0007669"/>
    <property type="project" value="InterPro"/>
</dbReference>
<dbReference type="GO" id="GO:0071770">
    <property type="term" value="P:DIM/DIP cell wall layer assembly"/>
    <property type="evidence" value="ECO:0000314"/>
    <property type="project" value="MTBBASE"/>
</dbReference>
<dbReference type="GO" id="GO:0006633">
    <property type="term" value="P:fatty acid biosynthetic process"/>
    <property type="evidence" value="ECO:0000314"/>
    <property type="project" value="MTBBASE"/>
</dbReference>
<dbReference type="GO" id="GO:0097041">
    <property type="term" value="P:phenolic phthiocerol biosynthetic process"/>
    <property type="evidence" value="ECO:0000250"/>
    <property type="project" value="UniProtKB"/>
</dbReference>
<dbReference type="GO" id="GO:0097040">
    <property type="term" value="P:phthiocerol biosynthetic process"/>
    <property type="evidence" value="ECO:0000250"/>
    <property type="project" value="UniProtKB"/>
</dbReference>
<dbReference type="CDD" id="cd08955">
    <property type="entry name" value="KR_2_FAS_SDR_x"/>
    <property type="match status" value="1"/>
</dbReference>
<dbReference type="CDD" id="cd00833">
    <property type="entry name" value="PKS"/>
    <property type="match status" value="1"/>
</dbReference>
<dbReference type="FunFam" id="3.30.70.250:FF:000003">
    <property type="entry name" value="Polyketide beta-ketoacyl synthase Pks3"/>
    <property type="match status" value="1"/>
</dbReference>
<dbReference type="FunFam" id="3.40.47.10:FF:000019">
    <property type="entry name" value="Polyketide synthase type I"/>
    <property type="match status" value="1"/>
</dbReference>
<dbReference type="Gene3D" id="3.40.47.10">
    <property type="match status" value="1"/>
</dbReference>
<dbReference type="Gene3D" id="1.10.1200.10">
    <property type="entry name" value="ACP-like"/>
    <property type="match status" value="1"/>
</dbReference>
<dbReference type="Gene3D" id="3.30.70.250">
    <property type="entry name" value="Malonyl-CoA ACP transacylase, ACP-binding"/>
    <property type="match status" value="1"/>
</dbReference>
<dbReference type="Gene3D" id="3.40.366.10">
    <property type="entry name" value="Malonyl-Coenzyme A Acyl Carrier Protein, domain 2"/>
    <property type="match status" value="1"/>
</dbReference>
<dbReference type="Gene3D" id="3.40.50.720">
    <property type="entry name" value="NAD(P)-binding Rossmann-like Domain"/>
    <property type="match status" value="1"/>
</dbReference>
<dbReference type="Gene3D" id="3.10.129.110">
    <property type="entry name" value="Polyketide synthase dehydratase"/>
    <property type="match status" value="1"/>
</dbReference>
<dbReference type="InterPro" id="IPR001227">
    <property type="entry name" value="Ac_transferase_dom_sf"/>
</dbReference>
<dbReference type="InterPro" id="IPR036736">
    <property type="entry name" value="ACP-like_sf"/>
</dbReference>
<dbReference type="InterPro" id="IPR014043">
    <property type="entry name" value="Acyl_transferase_dom"/>
</dbReference>
<dbReference type="InterPro" id="IPR016035">
    <property type="entry name" value="Acyl_Trfase/lysoPLipase"/>
</dbReference>
<dbReference type="InterPro" id="IPR018201">
    <property type="entry name" value="Ketoacyl_synth_AS"/>
</dbReference>
<dbReference type="InterPro" id="IPR014031">
    <property type="entry name" value="Ketoacyl_synth_C"/>
</dbReference>
<dbReference type="InterPro" id="IPR014030">
    <property type="entry name" value="Ketoacyl_synth_N"/>
</dbReference>
<dbReference type="InterPro" id="IPR016036">
    <property type="entry name" value="Malonyl_transacylase_ACP-bd"/>
</dbReference>
<dbReference type="InterPro" id="IPR036291">
    <property type="entry name" value="NAD(P)-bd_dom_sf"/>
</dbReference>
<dbReference type="InterPro" id="IPR032821">
    <property type="entry name" value="PKS_assoc"/>
</dbReference>
<dbReference type="InterPro" id="IPR020841">
    <property type="entry name" value="PKS_Beta-ketoAc_synthase_dom"/>
</dbReference>
<dbReference type="InterPro" id="IPR042104">
    <property type="entry name" value="PKS_dehydratase_sf"/>
</dbReference>
<dbReference type="InterPro" id="IPR020807">
    <property type="entry name" value="PKS_DH"/>
</dbReference>
<dbReference type="InterPro" id="IPR049551">
    <property type="entry name" value="PKS_DH_C"/>
</dbReference>
<dbReference type="InterPro" id="IPR049552">
    <property type="entry name" value="PKS_DH_N"/>
</dbReference>
<dbReference type="InterPro" id="IPR013968">
    <property type="entry name" value="PKS_KR"/>
</dbReference>
<dbReference type="InterPro" id="IPR049900">
    <property type="entry name" value="PKS_mFAS_DH"/>
</dbReference>
<dbReference type="InterPro" id="IPR050091">
    <property type="entry name" value="PKS_NRPS_Biosynth_Enz"/>
</dbReference>
<dbReference type="InterPro" id="IPR020806">
    <property type="entry name" value="PKS_PP-bd"/>
</dbReference>
<dbReference type="InterPro" id="IPR009081">
    <property type="entry name" value="PP-bd_ACP"/>
</dbReference>
<dbReference type="InterPro" id="IPR006162">
    <property type="entry name" value="Ppantetheine_attach_site"/>
</dbReference>
<dbReference type="InterPro" id="IPR016039">
    <property type="entry name" value="Thiolase-like"/>
</dbReference>
<dbReference type="PANTHER" id="PTHR43775">
    <property type="entry name" value="FATTY ACID SYNTHASE"/>
    <property type="match status" value="1"/>
</dbReference>
<dbReference type="PANTHER" id="PTHR43775:SF37">
    <property type="entry name" value="SI:DKEY-61P9.11"/>
    <property type="match status" value="1"/>
</dbReference>
<dbReference type="Pfam" id="PF00698">
    <property type="entry name" value="Acyl_transf_1"/>
    <property type="match status" value="1"/>
</dbReference>
<dbReference type="Pfam" id="PF16197">
    <property type="entry name" value="KAsynt_C_assoc"/>
    <property type="match status" value="1"/>
</dbReference>
<dbReference type="Pfam" id="PF00109">
    <property type="entry name" value="ketoacyl-synt"/>
    <property type="match status" value="1"/>
</dbReference>
<dbReference type="Pfam" id="PF02801">
    <property type="entry name" value="Ketoacyl-synt_C"/>
    <property type="match status" value="1"/>
</dbReference>
<dbReference type="Pfam" id="PF08659">
    <property type="entry name" value="KR"/>
    <property type="match status" value="1"/>
</dbReference>
<dbReference type="Pfam" id="PF21089">
    <property type="entry name" value="PKS_DH_N"/>
    <property type="match status" value="1"/>
</dbReference>
<dbReference type="Pfam" id="PF00550">
    <property type="entry name" value="PP-binding"/>
    <property type="match status" value="1"/>
</dbReference>
<dbReference type="Pfam" id="PF14765">
    <property type="entry name" value="PS-DH"/>
    <property type="match status" value="1"/>
</dbReference>
<dbReference type="SMART" id="SM00827">
    <property type="entry name" value="PKS_AT"/>
    <property type="match status" value="1"/>
</dbReference>
<dbReference type="SMART" id="SM00826">
    <property type="entry name" value="PKS_DH"/>
    <property type="match status" value="1"/>
</dbReference>
<dbReference type="SMART" id="SM00822">
    <property type="entry name" value="PKS_KR"/>
    <property type="match status" value="1"/>
</dbReference>
<dbReference type="SMART" id="SM00825">
    <property type="entry name" value="PKS_KS"/>
    <property type="match status" value="1"/>
</dbReference>
<dbReference type="SMART" id="SM00823">
    <property type="entry name" value="PKS_PP"/>
    <property type="match status" value="1"/>
</dbReference>
<dbReference type="SUPFAM" id="SSF47336">
    <property type="entry name" value="ACP-like"/>
    <property type="match status" value="1"/>
</dbReference>
<dbReference type="SUPFAM" id="SSF52151">
    <property type="entry name" value="FabD/lysophospholipase-like"/>
    <property type="match status" value="1"/>
</dbReference>
<dbReference type="SUPFAM" id="SSF51735">
    <property type="entry name" value="NAD(P)-binding Rossmann-fold domains"/>
    <property type="match status" value="2"/>
</dbReference>
<dbReference type="SUPFAM" id="SSF55048">
    <property type="entry name" value="Probable ACP-binding domain of malonyl-CoA ACP transacylase"/>
    <property type="match status" value="1"/>
</dbReference>
<dbReference type="SUPFAM" id="SSF53901">
    <property type="entry name" value="Thiolase-like"/>
    <property type="match status" value="1"/>
</dbReference>
<dbReference type="PROSITE" id="PS50075">
    <property type="entry name" value="CARRIER"/>
    <property type="match status" value="1"/>
</dbReference>
<dbReference type="PROSITE" id="PS00606">
    <property type="entry name" value="KS3_1"/>
    <property type="match status" value="1"/>
</dbReference>
<dbReference type="PROSITE" id="PS52004">
    <property type="entry name" value="KS3_2"/>
    <property type="match status" value="1"/>
</dbReference>
<dbReference type="PROSITE" id="PS00012">
    <property type="entry name" value="PHOSPHOPANTETHEINE"/>
    <property type="match status" value="1"/>
</dbReference>
<dbReference type="PROSITE" id="PS52019">
    <property type="entry name" value="PKS_MFAS_DH"/>
    <property type="match status" value="1"/>
</dbReference>
<feature type="chain" id="PRO_0000406950" description="Phenolphthiocerol/phthiocerol polyketide synthase subunit D">
    <location>
        <begin position="1"/>
        <end position="1827"/>
    </location>
</feature>
<feature type="domain" description="Ketosynthase family 3 (KS3)" evidence="3">
    <location>
        <begin position="35"/>
        <end position="461"/>
    </location>
</feature>
<feature type="domain" description="PKS/mFAS DH" evidence="4">
    <location>
        <begin position="910"/>
        <end position="1198"/>
    </location>
</feature>
<feature type="domain" description="Carrier" evidence="2">
    <location>
        <begin position="1706"/>
        <end position="1785"/>
    </location>
</feature>
<feature type="region of interest" description="Acyltransferase" evidence="1">
    <location>
        <begin position="566"/>
        <end position="876"/>
    </location>
</feature>
<feature type="region of interest" description="Dehydratase" evidence="1">
    <location>
        <begin position="910"/>
        <end position="1076"/>
    </location>
</feature>
<feature type="region of interest" description="N-terminal hotdog fold" evidence="4">
    <location>
        <begin position="910"/>
        <end position="1037"/>
    </location>
</feature>
<feature type="region of interest" description="C-terminal hotdog fold" evidence="4">
    <location>
        <begin position="1050"/>
        <end position="1198"/>
    </location>
</feature>
<feature type="region of interest" description="Beta-ketoacyl reductase" evidence="1">
    <location>
        <begin position="1439"/>
        <end position="1617"/>
    </location>
</feature>
<feature type="region of interest" description="Disordered" evidence="6">
    <location>
        <begin position="1807"/>
        <end position="1827"/>
    </location>
</feature>
<feature type="compositionally biased region" description="Basic residues" evidence="6">
    <location>
        <begin position="1807"/>
        <end position="1820"/>
    </location>
</feature>
<feature type="active site" description="For beta-ketoacyl synthase activity" evidence="3">
    <location>
        <position position="207"/>
    </location>
</feature>
<feature type="active site" description="For beta-ketoacyl synthase activity" evidence="3">
    <location>
        <position position="342"/>
    </location>
</feature>
<feature type="active site" description="For beta-ketoacyl synthase activity" evidence="3">
    <location>
        <position position="383"/>
    </location>
</feature>
<feature type="active site" description="For malonyltransferase activity" evidence="5">
    <location>
        <position position="654"/>
    </location>
</feature>
<feature type="active site" description="Proton acceptor; for dehydratase activity" evidence="4">
    <location>
        <position position="942"/>
    </location>
</feature>
<feature type="active site" description="Proton donor; for dehydratase activity" evidence="4">
    <location>
        <position position="1111"/>
    </location>
</feature>
<feature type="binding site" evidence="1">
    <location>
        <begin position="1440"/>
        <end position="1485"/>
    </location>
    <ligand>
        <name>NADP(+)</name>
        <dbReference type="ChEBI" id="CHEBI:58349"/>
    </ligand>
</feature>
<feature type="modified residue" description="O-(pantetheine 4'-phosphoryl)serine" evidence="2">
    <location>
        <position position="1745"/>
    </location>
</feature>
<evidence type="ECO:0000250" key="1"/>
<evidence type="ECO:0000255" key="2">
    <source>
        <dbReference type="PROSITE-ProRule" id="PRU00258"/>
    </source>
</evidence>
<evidence type="ECO:0000255" key="3">
    <source>
        <dbReference type="PROSITE-ProRule" id="PRU01348"/>
    </source>
</evidence>
<evidence type="ECO:0000255" key="4">
    <source>
        <dbReference type="PROSITE-ProRule" id="PRU01363"/>
    </source>
</evidence>
<evidence type="ECO:0000255" key="5">
    <source>
        <dbReference type="PROSITE-ProRule" id="PRU10022"/>
    </source>
</evidence>
<evidence type="ECO:0000256" key="6">
    <source>
        <dbReference type="SAM" id="MobiDB-lite"/>
    </source>
</evidence>
<evidence type="ECO:0000269" key="7">
    <source>
    </source>
</evidence>
<evidence type="ECO:0000269" key="8">
    <source>
    </source>
</evidence>
<evidence type="ECO:0000305" key="9"/>
<evidence type="ECO:0000305" key="10">
    <source>
    </source>
</evidence>
<protein>
    <recommendedName>
        <fullName evidence="9">Phenolphthiocerol/phthiocerol polyketide synthase subunit D</fullName>
        <ecNumber evidence="7 10">2.3.1.292</ecNumber>
    </recommendedName>
    <alternativeName>
        <fullName>(Phenol)carboxyphthiodiolenone synthase subunit D</fullName>
    </alternativeName>
    <alternativeName>
        <fullName>Beta-ketoacyl-acyl-carrier-protein synthase I</fullName>
    </alternativeName>
    <alternativeName>
        <fullName>Phthiocerol synthesis polyketide synthase type I PpsD</fullName>
    </alternativeName>
</protein>
<accession>P9WQE3</accession>
<accession>L0TDZ9</accession>
<accession>P96203</accession>
<accession>Q7D6F0</accession>
<keyword id="KW-0276">Fatty acid metabolism</keyword>
<keyword id="KW-0443">Lipid metabolism</keyword>
<keyword id="KW-0511">Multifunctional enzyme</keyword>
<keyword id="KW-0521">NADP</keyword>
<keyword id="KW-0560">Oxidoreductase</keyword>
<keyword id="KW-0596">Phosphopantetheine</keyword>
<keyword id="KW-0597">Phosphoprotein</keyword>
<keyword id="KW-1185">Reference proteome</keyword>
<keyword id="KW-0808">Transferase</keyword>
<name>PPSD_MYCTU</name>
<gene>
    <name type="primary">ppsD</name>
    <name type="ordered locus">Rv2934</name>
</gene>
<comment type="function">
    <text evidence="7 8">Part of the PpsABCDE complex involved in the biosynthesis of the lipid core common to phthiocerols and phenolphthiocerols by successive additions of malonyl-CoA or methylmalonyl-CoA extender units (PubMed:15749014, PubMed:20553505). PpsA can accept as substrate the activated forms of either icosanoyl (C20), docosanoyl (C22) or lignoceroyl (C24) groups from FadD26, or a (4-hydroxyphenyl)-C17 or (4-hydroxyphenyl)-C19 fatty acyl from FadD29 (PubMed:15749014, PubMed:20553505). PpsA initiates the biosynthesis and extends its substrate using a malonyl-CoA extender unit. The PpsB and PpsC proteins add the second and third malonyl-CoA extender units. PpsD adds an (R)-methylmalonyl unit and PpsE adds a second (R)-methylmalonyl unit. The incorporation of the methylmalonyl units results in formation of two branched methyl groups in the elongated product (PubMed:15749014).</text>
</comment>
<comment type="catalytic activity">
    <reaction evidence="7 10">
        <text>icosanoyl-[(phenol)carboxyphthiodiolenone synthase] + 2 (S)-methylmalonyl-CoA + 3 malonyl-CoA + 5 NADPH + 10 H(+) = C32-carboxyphthiodiolenone-[(phenol)carboxyphthiodiolenone synthase] + 5 CO2 + 5 NADP(+) + 5 CoA + 2 H2O</text>
        <dbReference type="Rhea" id="RHEA:57748"/>
        <dbReference type="Rhea" id="RHEA-COMP:14985"/>
        <dbReference type="Rhea" id="RHEA-COMP:14986"/>
        <dbReference type="ChEBI" id="CHEBI:15377"/>
        <dbReference type="ChEBI" id="CHEBI:15378"/>
        <dbReference type="ChEBI" id="CHEBI:16526"/>
        <dbReference type="ChEBI" id="CHEBI:57287"/>
        <dbReference type="ChEBI" id="CHEBI:57327"/>
        <dbReference type="ChEBI" id="CHEBI:57384"/>
        <dbReference type="ChEBI" id="CHEBI:57783"/>
        <dbReference type="ChEBI" id="CHEBI:58349"/>
        <dbReference type="ChEBI" id="CHEBI:87848"/>
        <dbReference type="ChEBI" id="CHEBI:142236"/>
        <dbReference type="EC" id="2.3.1.292"/>
    </reaction>
</comment>
<comment type="catalytic activity">
    <reaction evidence="7 10">
        <text>docosanoyl-[(phenol)carboxyphthiodiolenone synthase] + 2 (S)-methylmalonyl-CoA + 3 malonyl-CoA + 5 NADPH + 10 H(+) = C34-carboxyphthiodiolenone-[(phenol)carboxyphthiodiolenone synthase] + 5 CO2 + 5 NADP(+) + 5 CoA + 2 H2O</text>
        <dbReference type="Rhea" id="RHEA:57752"/>
        <dbReference type="Rhea" id="RHEA-COMP:14987"/>
        <dbReference type="Rhea" id="RHEA-COMP:14988"/>
        <dbReference type="ChEBI" id="CHEBI:15377"/>
        <dbReference type="ChEBI" id="CHEBI:15378"/>
        <dbReference type="ChEBI" id="CHEBI:16526"/>
        <dbReference type="ChEBI" id="CHEBI:57287"/>
        <dbReference type="ChEBI" id="CHEBI:57327"/>
        <dbReference type="ChEBI" id="CHEBI:57384"/>
        <dbReference type="ChEBI" id="CHEBI:57783"/>
        <dbReference type="ChEBI" id="CHEBI:58349"/>
        <dbReference type="ChEBI" id="CHEBI:142237"/>
        <dbReference type="ChEBI" id="CHEBI:142238"/>
        <dbReference type="EC" id="2.3.1.292"/>
    </reaction>
</comment>
<comment type="catalytic activity">
    <reaction evidence="7 10">
        <text>17-(4-hydroxyphenyl)heptadecanoyl-[(phenol)carboxyphthiodiolenone synthase] + 2 (S)-methylmalonyl-CoA + 3 malonyl-CoA + 5 NADPH + 10 H(+) = C35-(phenol)carboxyphthiodiolenone-[(phenol)carboxyphthiodiolenone synthase] + 5 CO2 + 5 NADP(+) + 5 CoA + 2 H2O</text>
        <dbReference type="Rhea" id="RHEA:57756"/>
        <dbReference type="Rhea" id="RHEA-COMP:14272"/>
        <dbReference type="Rhea" id="RHEA-COMP:14989"/>
        <dbReference type="ChEBI" id="CHEBI:15377"/>
        <dbReference type="ChEBI" id="CHEBI:15378"/>
        <dbReference type="ChEBI" id="CHEBI:16526"/>
        <dbReference type="ChEBI" id="CHEBI:57287"/>
        <dbReference type="ChEBI" id="CHEBI:57327"/>
        <dbReference type="ChEBI" id="CHEBI:57384"/>
        <dbReference type="ChEBI" id="CHEBI:57783"/>
        <dbReference type="ChEBI" id="CHEBI:58349"/>
        <dbReference type="ChEBI" id="CHEBI:133300"/>
        <dbReference type="ChEBI" id="CHEBI:142259"/>
        <dbReference type="EC" id="2.3.1.292"/>
    </reaction>
</comment>
<comment type="catalytic activity">
    <reaction evidence="7 10">
        <text>19-(4-hydroxyphenyl)nonadecanoyl-[(phenol)carboxyphthiodiolenone synthase] + 2 (S)-methylmalonyl-CoA + 3 malonyl-CoA + 5 NADPH + 10 H(+) = C37-(phenol)carboxyphthiodiolenone-[(phenol)carboxyphthiodiolenone synthase] + 5 CO2 + 5 NADP(+) + 5 CoA + 2 H2O</text>
        <dbReference type="Rhea" id="RHEA:57760"/>
        <dbReference type="Rhea" id="RHEA-COMP:14273"/>
        <dbReference type="Rhea" id="RHEA-COMP:14990"/>
        <dbReference type="ChEBI" id="CHEBI:15377"/>
        <dbReference type="ChEBI" id="CHEBI:15378"/>
        <dbReference type="ChEBI" id="CHEBI:16526"/>
        <dbReference type="ChEBI" id="CHEBI:57287"/>
        <dbReference type="ChEBI" id="CHEBI:57327"/>
        <dbReference type="ChEBI" id="CHEBI:57384"/>
        <dbReference type="ChEBI" id="CHEBI:57783"/>
        <dbReference type="ChEBI" id="CHEBI:58349"/>
        <dbReference type="ChEBI" id="CHEBI:133301"/>
        <dbReference type="ChEBI" id="CHEBI:142260"/>
        <dbReference type="EC" id="2.3.1.292"/>
    </reaction>
</comment>
<comment type="cofactor">
    <cofactor evidence="7">
        <name>NADP(+)</name>
        <dbReference type="ChEBI" id="CHEBI:58349"/>
    </cofactor>
</comment>
<comment type="cofactor">
    <cofactor evidence="1">
        <name>pantetheine 4'-phosphate</name>
        <dbReference type="ChEBI" id="CHEBI:47942"/>
    </cofactor>
    <text evidence="1">Binds 1 phosphopantetheine covalently.</text>
</comment>
<comment type="pathway">
    <text evidence="7">Lipid metabolism; fatty acid biosynthesis.</text>
</comment>
<reference key="1">
    <citation type="journal article" date="1998" name="Nature">
        <title>Deciphering the biology of Mycobacterium tuberculosis from the complete genome sequence.</title>
        <authorList>
            <person name="Cole S.T."/>
            <person name="Brosch R."/>
            <person name="Parkhill J."/>
            <person name="Garnier T."/>
            <person name="Churcher C.M."/>
            <person name="Harris D.E."/>
            <person name="Gordon S.V."/>
            <person name="Eiglmeier K."/>
            <person name="Gas S."/>
            <person name="Barry C.E. III"/>
            <person name="Tekaia F."/>
            <person name="Badcock K."/>
            <person name="Basham D."/>
            <person name="Brown D."/>
            <person name="Chillingworth T."/>
            <person name="Connor R."/>
            <person name="Davies R.M."/>
            <person name="Devlin K."/>
            <person name="Feltwell T."/>
            <person name="Gentles S."/>
            <person name="Hamlin N."/>
            <person name="Holroyd S."/>
            <person name="Hornsby T."/>
            <person name="Jagels K."/>
            <person name="Krogh A."/>
            <person name="McLean J."/>
            <person name="Moule S."/>
            <person name="Murphy L.D."/>
            <person name="Oliver S."/>
            <person name="Osborne J."/>
            <person name="Quail M.A."/>
            <person name="Rajandream M.A."/>
            <person name="Rogers J."/>
            <person name="Rutter S."/>
            <person name="Seeger K."/>
            <person name="Skelton S."/>
            <person name="Squares S."/>
            <person name="Squares R."/>
            <person name="Sulston J.E."/>
            <person name="Taylor K."/>
            <person name="Whitehead S."/>
            <person name="Barrell B.G."/>
        </authorList>
    </citation>
    <scope>NUCLEOTIDE SEQUENCE [LARGE SCALE GENOMIC DNA]</scope>
    <source>
        <strain>ATCC 25618 / H37Rv</strain>
    </source>
</reference>
<reference key="2">
    <citation type="journal article" date="2005" name="Mol. Cell">
        <title>Dissecting the mechanism and assembly of a complex virulence mycobacterial lipid.</title>
        <authorList>
            <person name="Trivedi O.A."/>
            <person name="Arora P."/>
            <person name="Vats A."/>
            <person name="Ansari M.Z."/>
            <person name="Tickoo R."/>
            <person name="Sridharan V."/>
            <person name="Mohanty D."/>
            <person name="Gokhale R.S."/>
        </authorList>
    </citation>
    <scope>FUNCTION</scope>
    <scope>CATALYTIC ACTIVITY</scope>
    <scope>COFACTOR</scope>
    <scope>PATHWAY</scope>
</reference>
<reference key="3">
    <citation type="journal article" date="2010" name="FEBS J.">
        <title>Delineation of the roles of FadD22, FadD26 and FadD29 in the biosynthesis of phthiocerol dimycocerosates and related compounds in Mycobacterium tuberculosis.</title>
        <authorList>
            <person name="Simeone R."/>
            <person name="Leger M."/>
            <person name="Constant P."/>
            <person name="Malaga W."/>
            <person name="Marrakchi H."/>
            <person name="Daffe M."/>
            <person name="Guilhot C."/>
            <person name="Chalut C."/>
        </authorList>
    </citation>
    <scope>FUNCTION</scope>
    <scope>CATALYTIC ACTIVITY</scope>
</reference>
<reference key="4">
    <citation type="journal article" date="2011" name="Mol. Cell. Proteomics">
        <title>Proteogenomic analysis of Mycobacterium tuberculosis by high resolution mass spectrometry.</title>
        <authorList>
            <person name="Kelkar D.S."/>
            <person name="Kumar D."/>
            <person name="Kumar P."/>
            <person name="Balakrishnan L."/>
            <person name="Muthusamy B."/>
            <person name="Yadav A.K."/>
            <person name="Shrivastava P."/>
            <person name="Marimuthu A."/>
            <person name="Anand S."/>
            <person name="Sundaram H."/>
            <person name="Kingsbury R."/>
            <person name="Harsha H.C."/>
            <person name="Nair B."/>
            <person name="Prasad T.S."/>
            <person name="Chauhan D.S."/>
            <person name="Katoch K."/>
            <person name="Katoch V.M."/>
            <person name="Kumar P."/>
            <person name="Chaerkady R."/>
            <person name="Ramachandran S."/>
            <person name="Dash D."/>
            <person name="Pandey A."/>
        </authorList>
    </citation>
    <scope>IDENTIFICATION BY MASS SPECTROMETRY [LARGE SCALE ANALYSIS]</scope>
    <source>
        <strain>ATCC 25618 / H37Rv</strain>
    </source>
</reference>